<sequence length="364" mass="38953">MSAPKKIVVLPGDHVGQEITAEAIKVLKAISDVRSNVKFDFENHLIGGAAIDATGVPLPDEALEASKKADAVLLGAVGGPKWGTGSVRPEQGLLKIRKELQLYANLRPCNFASDSLLDLSPIKPQFAKGTDFVVVRELVGGIYFGKRKEDDGDGVAWDSEQYTVPEVQRITRMAAFMALQHEPPLPIWSLDKANVLASSRLWRKTVEETIKNEFPTLKVQHQLIDSAAMILVKNPTHLNGIIITSNMFGDIISDEASVIPGSLGLLPSASLASLPDKNTAFGLYEPCHGSAPDLPKNKVNPIATILSAAMMLKLSLNLPEEGKAIEDAVKKVLDAGIRTGDLGGSNSTTEVGDAVAEEVKKILA</sequence>
<comment type="function">
    <text>Catalyzes the oxidation of 3-carboxy-2-hydroxy-4-methylpentanoate (3-isopropylmalate) to 3-carboxy-4-methyl-2-oxopentanoate. The product decarboxylates to 4-methyl-2 oxopentanoate.</text>
</comment>
<comment type="catalytic activity">
    <reaction>
        <text>(2R,3S)-3-isopropylmalate + NAD(+) = 4-methyl-2-oxopentanoate + CO2 + NADH</text>
        <dbReference type="Rhea" id="RHEA:32271"/>
        <dbReference type="ChEBI" id="CHEBI:16526"/>
        <dbReference type="ChEBI" id="CHEBI:17865"/>
        <dbReference type="ChEBI" id="CHEBI:35121"/>
        <dbReference type="ChEBI" id="CHEBI:57540"/>
        <dbReference type="ChEBI" id="CHEBI:57945"/>
        <dbReference type="EC" id="1.1.1.85"/>
    </reaction>
</comment>
<comment type="cofactor">
    <cofactor evidence="1">
        <name>Mg(2+)</name>
        <dbReference type="ChEBI" id="CHEBI:18420"/>
    </cofactor>
    <cofactor evidence="1">
        <name>Mn(2+)</name>
        <dbReference type="ChEBI" id="CHEBI:29035"/>
    </cofactor>
    <text evidence="1">Binds 1 Mg(2+) or Mn(2+) ion per subunit.</text>
</comment>
<comment type="pathway">
    <text>Amino-acid biosynthesis; L-leucine biosynthesis; L-leucine from 3-methyl-2-oxobutanoate: step 3/4.</text>
</comment>
<comment type="subunit">
    <text evidence="1">Homodimer.</text>
</comment>
<comment type="subcellular location">
    <subcellularLocation>
        <location>Cytoplasm</location>
    </subcellularLocation>
</comment>
<comment type="similarity">
    <text evidence="2">Belongs to the isocitrate and isopropylmalate dehydrogenases family.</text>
</comment>
<feature type="chain" id="PRO_0000083623" description="3-isopropylmalate dehydrogenase">
    <location>
        <begin position="1"/>
        <end position="364"/>
    </location>
</feature>
<feature type="binding site" evidence="1">
    <location>
        <begin position="79"/>
        <end position="90"/>
    </location>
    <ligand>
        <name>NAD(+)</name>
        <dbReference type="ChEBI" id="CHEBI:57540"/>
    </ligand>
</feature>
<feature type="binding site" evidence="1">
    <location>
        <position position="97"/>
    </location>
    <ligand>
        <name>substrate</name>
    </ligand>
</feature>
<feature type="binding site" evidence="1">
    <location>
        <position position="107"/>
    </location>
    <ligand>
        <name>substrate</name>
    </ligand>
</feature>
<feature type="binding site" evidence="1">
    <location>
        <position position="136"/>
    </location>
    <ligand>
        <name>substrate</name>
    </ligand>
</feature>
<feature type="binding site" evidence="1">
    <location>
        <position position="225"/>
    </location>
    <ligand>
        <name>Mg(2+)</name>
        <dbReference type="ChEBI" id="CHEBI:18420"/>
    </ligand>
</feature>
<feature type="binding site" evidence="1">
    <location>
        <position position="225"/>
    </location>
    <ligand>
        <name>substrate</name>
    </ligand>
</feature>
<feature type="binding site" evidence="1">
    <location>
        <position position="250"/>
    </location>
    <ligand>
        <name>Mg(2+)</name>
        <dbReference type="ChEBI" id="CHEBI:18420"/>
    </ligand>
</feature>
<feature type="binding site" evidence="1">
    <location>
        <position position="254"/>
    </location>
    <ligand>
        <name>Mg(2+)</name>
        <dbReference type="ChEBI" id="CHEBI:18420"/>
    </ligand>
</feature>
<feature type="binding site" evidence="1">
    <location>
        <begin position="289"/>
        <end position="300"/>
    </location>
    <ligand>
        <name>NAD(+)</name>
        <dbReference type="ChEBI" id="CHEBI:57540"/>
    </ligand>
</feature>
<feature type="site" description="Important for catalysis" evidence="1">
    <location>
        <position position="143"/>
    </location>
</feature>
<feature type="site" description="Important for catalysis" evidence="1">
    <location>
        <position position="192"/>
    </location>
</feature>
<feature type="sequence conflict" description="In Ref. 1, 2 and 3." evidence="2" ref="1 2 3">
    <original>A</original>
    <variation>V</variation>
    <location>
        <position position="69"/>
    </location>
</feature>
<feature type="sequence conflict" description="In Ref. 2 and 3." evidence="2" ref="2 3">
    <original>N</original>
    <variation>D</variation>
    <location>
        <position position="300"/>
    </location>
</feature>
<name>LEU3_YEAST</name>
<accession>P04173</accession>
<accession>D6VQZ6</accession>
<proteinExistence type="evidence at protein level"/>
<dbReference type="EC" id="1.1.1.85"/>
<dbReference type="EMBL" id="X03840">
    <property type="protein sequence ID" value="CAA27459.1"/>
    <property type="molecule type" value="Genomic_DNA"/>
</dbReference>
<dbReference type="EMBL" id="X59720">
    <property type="protein sequence ID" value="CAA42366.2"/>
    <property type="molecule type" value="Genomic_DNA"/>
</dbReference>
<dbReference type="EMBL" id="M12909">
    <property type="protein sequence ID" value="AAA66917.1"/>
    <property type="molecule type" value="Genomic_DNA"/>
</dbReference>
<dbReference type="EMBL" id="BK006937">
    <property type="protein sequence ID" value="DAA07465.1"/>
    <property type="molecule type" value="Genomic_DNA"/>
</dbReference>
<dbReference type="PIR" id="S19344">
    <property type="entry name" value="DEBYI"/>
</dbReference>
<dbReference type="RefSeq" id="NP_009911.2">
    <property type="nucleotide sequence ID" value="NM_001178665.1"/>
</dbReference>
<dbReference type="SMR" id="P04173"/>
<dbReference type="BioGRID" id="30966">
    <property type="interactions" value="28"/>
</dbReference>
<dbReference type="DIP" id="DIP-7880N"/>
<dbReference type="FunCoup" id="P04173">
    <property type="interactions" value="1187"/>
</dbReference>
<dbReference type="IntAct" id="P04173">
    <property type="interactions" value="157"/>
</dbReference>
<dbReference type="MINT" id="P04173"/>
<dbReference type="STRING" id="4932.YCL018W"/>
<dbReference type="iPTMnet" id="P04173"/>
<dbReference type="PaxDb" id="4932-YCL018W"/>
<dbReference type="PeptideAtlas" id="P04173"/>
<dbReference type="EnsemblFungi" id="YCL018W_mRNA">
    <property type="protein sequence ID" value="YCL018W"/>
    <property type="gene ID" value="YCL018W"/>
</dbReference>
<dbReference type="GeneID" id="850342"/>
<dbReference type="KEGG" id="sce:YCL018W"/>
<dbReference type="AGR" id="SGD:S000000523"/>
<dbReference type="SGD" id="S000000523">
    <property type="gene designation" value="LEU2"/>
</dbReference>
<dbReference type="VEuPathDB" id="FungiDB:YCL018W"/>
<dbReference type="eggNOG" id="KOG0786">
    <property type="taxonomic scope" value="Eukaryota"/>
</dbReference>
<dbReference type="GeneTree" id="ENSGT00950000182989"/>
<dbReference type="HOGENOM" id="CLU_031953_0_3_1"/>
<dbReference type="InParanoid" id="P04173"/>
<dbReference type="OMA" id="EYDLGAR"/>
<dbReference type="OrthoDB" id="419183at2759"/>
<dbReference type="BioCyc" id="MetaCyc:YCL018W-MONOMER"/>
<dbReference type="BioCyc" id="YEAST:YCL018W-MONOMER"/>
<dbReference type="UniPathway" id="UPA00048">
    <property type="reaction ID" value="UER00072"/>
</dbReference>
<dbReference type="BioGRID-ORCS" id="850342">
    <property type="hits" value="4 hits in 10 CRISPR screens"/>
</dbReference>
<dbReference type="PHI-base" id="PHI:504"/>
<dbReference type="PRO" id="PR:P04173"/>
<dbReference type="Proteomes" id="UP000002311">
    <property type="component" value="Chromosome III"/>
</dbReference>
<dbReference type="RNAct" id="P04173">
    <property type="molecule type" value="protein"/>
</dbReference>
<dbReference type="GO" id="GO:0005829">
    <property type="term" value="C:cytosol"/>
    <property type="evidence" value="ECO:0000314"/>
    <property type="project" value="SGD"/>
</dbReference>
<dbReference type="GO" id="GO:0003862">
    <property type="term" value="F:3-isopropylmalate dehydrogenase activity"/>
    <property type="evidence" value="ECO:0000314"/>
    <property type="project" value="SGD"/>
</dbReference>
<dbReference type="GO" id="GO:0000287">
    <property type="term" value="F:magnesium ion binding"/>
    <property type="evidence" value="ECO:0007669"/>
    <property type="project" value="InterPro"/>
</dbReference>
<dbReference type="GO" id="GO:0051287">
    <property type="term" value="F:NAD binding"/>
    <property type="evidence" value="ECO:0007669"/>
    <property type="project" value="InterPro"/>
</dbReference>
<dbReference type="GO" id="GO:0006097">
    <property type="term" value="P:glyoxylate cycle"/>
    <property type="evidence" value="ECO:0000315"/>
    <property type="project" value="SGD"/>
</dbReference>
<dbReference type="GO" id="GO:0009098">
    <property type="term" value="P:L-leucine biosynthetic process"/>
    <property type="evidence" value="ECO:0000315"/>
    <property type="project" value="SGD"/>
</dbReference>
<dbReference type="FunFam" id="3.40.718.10:FF:000006">
    <property type="entry name" value="3-isopropylmalate dehydrogenase"/>
    <property type="match status" value="1"/>
</dbReference>
<dbReference type="Gene3D" id="3.40.718.10">
    <property type="entry name" value="Isopropylmalate Dehydrogenase"/>
    <property type="match status" value="1"/>
</dbReference>
<dbReference type="InterPro" id="IPR019818">
    <property type="entry name" value="IsoCit/isopropylmalate_DH_CS"/>
</dbReference>
<dbReference type="InterPro" id="IPR024084">
    <property type="entry name" value="IsoPropMal-DH-like_dom"/>
</dbReference>
<dbReference type="InterPro" id="IPR004429">
    <property type="entry name" value="Isopropylmalate_DH"/>
</dbReference>
<dbReference type="NCBIfam" id="TIGR00169">
    <property type="entry name" value="leuB"/>
    <property type="match status" value="1"/>
</dbReference>
<dbReference type="PANTHER" id="PTHR42979">
    <property type="entry name" value="3-ISOPROPYLMALATE DEHYDROGENASE"/>
    <property type="match status" value="1"/>
</dbReference>
<dbReference type="PANTHER" id="PTHR42979:SF1">
    <property type="entry name" value="3-ISOPROPYLMALATE DEHYDROGENASE"/>
    <property type="match status" value="1"/>
</dbReference>
<dbReference type="Pfam" id="PF00180">
    <property type="entry name" value="Iso_dh"/>
    <property type="match status" value="1"/>
</dbReference>
<dbReference type="SMART" id="SM01329">
    <property type="entry name" value="Iso_dh"/>
    <property type="match status" value="1"/>
</dbReference>
<dbReference type="SUPFAM" id="SSF53659">
    <property type="entry name" value="Isocitrate/Isopropylmalate dehydrogenase-like"/>
    <property type="match status" value="1"/>
</dbReference>
<dbReference type="PROSITE" id="PS00470">
    <property type="entry name" value="IDH_IMDH"/>
    <property type="match status" value="1"/>
</dbReference>
<protein>
    <recommendedName>
        <fullName>3-isopropylmalate dehydrogenase</fullName>
        <shortName>3-IPM-DH</shortName>
        <shortName>IMDH</shortName>
        <ecNumber>1.1.1.85</ecNumber>
    </recommendedName>
    <alternativeName>
        <fullName>Beta-IPM dehydrogenase</fullName>
    </alternativeName>
</protein>
<evidence type="ECO:0000250" key="1"/>
<evidence type="ECO:0000305" key="2"/>
<keyword id="KW-0028">Amino-acid biosynthesis</keyword>
<keyword id="KW-0100">Branched-chain amino acid biosynthesis</keyword>
<keyword id="KW-0963">Cytoplasm</keyword>
<keyword id="KW-0432">Leucine biosynthesis</keyword>
<keyword id="KW-0460">Magnesium</keyword>
<keyword id="KW-0464">Manganese</keyword>
<keyword id="KW-0479">Metal-binding</keyword>
<keyword id="KW-0520">NAD</keyword>
<keyword id="KW-0560">Oxidoreductase</keyword>
<keyword id="KW-1185">Reference proteome</keyword>
<organism>
    <name type="scientific">Saccharomyces cerevisiae (strain ATCC 204508 / S288c)</name>
    <name type="common">Baker's yeast</name>
    <dbReference type="NCBI Taxonomy" id="559292"/>
    <lineage>
        <taxon>Eukaryota</taxon>
        <taxon>Fungi</taxon>
        <taxon>Dikarya</taxon>
        <taxon>Ascomycota</taxon>
        <taxon>Saccharomycotina</taxon>
        <taxon>Saccharomycetes</taxon>
        <taxon>Saccharomycetales</taxon>
        <taxon>Saccharomycetaceae</taxon>
        <taxon>Saccharomyces</taxon>
    </lineage>
</organism>
<gene>
    <name type="primary">LEU2</name>
    <name type="ordered locus">YCL018W</name>
    <name type="ORF">YCL18W</name>
</gene>
<reference key="1">
    <citation type="journal article" date="1986" name="Nucleic Acids Res.">
        <title>A 'hot-spot' for Ty transposition on the left arm of yeast chromosome III.</title>
        <authorList>
            <person name="Warmington J.R."/>
            <person name="Anwar R."/>
            <person name="Newlon C.S."/>
            <person name="Waring R.B."/>
            <person name="Davies R.W."/>
            <person name="Indge K.J."/>
            <person name="Oliver S.G."/>
        </authorList>
    </citation>
    <scope>NUCLEOTIDE SEQUENCE [GENOMIC DNA]</scope>
</reference>
<reference key="2">
    <citation type="journal article" date="1984" name="J. Biol. Chem.">
        <title>Yeast LEU2. Repression of mRNA levels by leucine and primary structure of the gene product.</title>
        <authorList>
            <person name="Andreadis A."/>
            <person name="Hsu Y.-P."/>
            <person name="Hermodson M."/>
            <person name="Kohlhaw G."/>
            <person name="Schimmel P."/>
        </authorList>
    </citation>
    <scope>NUCLEOTIDE SEQUENCE [GENOMIC DNA]</scope>
    <source>
        <strain>ATCC 38626 / AH22 / NRRL Y-12843</strain>
    </source>
</reference>
<reference key="3">
    <citation type="submission" date="1997-01" db="EMBL/GenBank/DDBJ databases">
        <authorList>
            <person name="Lu Q."/>
        </authorList>
    </citation>
    <scope>NUCLEOTIDE SEQUENCE [GENOMIC DNA]</scope>
</reference>
<reference key="4">
    <citation type="journal article" date="1992" name="Nature">
        <title>The complete DNA sequence of yeast chromosome III.</title>
        <authorList>
            <person name="Oliver S.G."/>
            <person name="van der Aart Q.J.M."/>
            <person name="Agostoni-Carbone M.L."/>
            <person name="Aigle M."/>
            <person name="Alberghina L."/>
            <person name="Alexandraki D."/>
            <person name="Antoine G."/>
            <person name="Anwar R."/>
            <person name="Ballesta J.P.G."/>
            <person name="Benit P."/>
            <person name="Berben G."/>
            <person name="Bergantino E."/>
            <person name="Biteau N."/>
            <person name="Bolle P.-A."/>
            <person name="Bolotin-Fukuhara M."/>
            <person name="Brown A."/>
            <person name="Brown A.J.P."/>
            <person name="Buhler J.-M."/>
            <person name="Carcano C."/>
            <person name="Carignani G."/>
            <person name="Cederberg H."/>
            <person name="Chanet R."/>
            <person name="Contreras R."/>
            <person name="Crouzet M."/>
            <person name="Daignan-Fornier B."/>
            <person name="Defoor E."/>
            <person name="Delgado M.D."/>
            <person name="Demolder J."/>
            <person name="Doira C."/>
            <person name="Dubois E."/>
            <person name="Dujon B."/>
            <person name="Duesterhoeft A."/>
            <person name="Erdmann D."/>
            <person name="Esteban M."/>
            <person name="Fabre F."/>
            <person name="Fairhead C."/>
            <person name="Faye G."/>
            <person name="Feldmann H."/>
            <person name="Fiers W."/>
            <person name="Francingues-Gaillard M.-C."/>
            <person name="Franco L."/>
            <person name="Frontali L."/>
            <person name="Fukuhara H."/>
            <person name="Fuller L.J."/>
            <person name="Galland P."/>
            <person name="Gent M.E."/>
            <person name="Gigot D."/>
            <person name="Gilliquet V."/>
            <person name="Glansdorff N."/>
            <person name="Goffeau A."/>
            <person name="Grenson M."/>
            <person name="Grisanti P."/>
            <person name="Grivell L.A."/>
            <person name="de Haan M."/>
            <person name="Haasemann M."/>
            <person name="Hatat D."/>
            <person name="Hoenicka J."/>
            <person name="Hegemann J.H."/>
            <person name="Herbert C.J."/>
            <person name="Hilger F."/>
            <person name="Hohmann S."/>
            <person name="Hollenberg C.P."/>
            <person name="Huse K."/>
            <person name="Iborra F."/>
            <person name="Indge K.J."/>
            <person name="Isono K."/>
            <person name="Jacq C."/>
            <person name="Jacquet M."/>
            <person name="James C.M."/>
            <person name="Jauniaux J.-C."/>
            <person name="Jia Y."/>
            <person name="Jimenez A."/>
            <person name="Kelly A."/>
            <person name="Kleinhans U."/>
            <person name="Kreisl P."/>
            <person name="Lanfranchi G."/>
            <person name="Lewis C."/>
            <person name="van der Linden C.G."/>
            <person name="Lucchini G."/>
            <person name="Lutzenkirchen K."/>
            <person name="Maat M.J."/>
            <person name="Mallet L."/>
            <person name="Mannhaupt G."/>
            <person name="Martegani E."/>
            <person name="Mathieu A."/>
            <person name="Maurer C.T.C."/>
            <person name="McConnell D."/>
            <person name="McKee R.A."/>
            <person name="Messenguy F."/>
            <person name="Mewes H.-W."/>
            <person name="Molemans F."/>
            <person name="Montague M.A."/>
            <person name="Muzi Falconi M."/>
            <person name="Navas L."/>
            <person name="Newlon C.S."/>
            <person name="Noone D."/>
            <person name="Pallier C."/>
            <person name="Panzeri L."/>
            <person name="Pearson B.M."/>
            <person name="Perea J."/>
            <person name="Philippsen P."/>
            <person name="Pierard A."/>
            <person name="Planta R.J."/>
            <person name="Plevani P."/>
            <person name="Poetsch B."/>
            <person name="Pohl F.M."/>
            <person name="Purnelle B."/>
            <person name="Ramezani Rad M."/>
            <person name="Rasmussen S.W."/>
            <person name="Raynal A."/>
            <person name="Remacha M.A."/>
            <person name="Richterich P."/>
            <person name="Roberts A.B."/>
            <person name="Rodriguez F."/>
            <person name="Sanz E."/>
            <person name="Schaaff-Gerstenschlaeger I."/>
            <person name="Scherens B."/>
            <person name="Schweitzer B."/>
            <person name="Shu Y."/>
            <person name="Skala J."/>
            <person name="Slonimski P.P."/>
            <person name="Sor F."/>
            <person name="Soustelle C."/>
            <person name="Spiegelberg R."/>
            <person name="Stateva L.I."/>
            <person name="Steensma H.Y."/>
            <person name="Steiner S."/>
            <person name="Thierry A."/>
            <person name="Thireos G."/>
            <person name="Tzermia M."/>
            <person name="Urrestarazu L.A."/>
            <person name="Valle G."/>
            <person name="Vetter I."/>
            <person name="van Vliet-Reedijk J.C."/>
            <person name="Voet M."/>
            <person name="Volckaert G."/>
            <person name="Vreken P."/>
            <person name="Wang H."/>
            <person name="Warmington J.R."/>
            <person name="von Wettstein D."/>
            <person name="Wicksteed B.L."/>
            <person name="Wilson C."/>
            <person name="Wurst H."/>
            <person name="Xu G."/>
            <person name="Yoshikawa A."/>
            <person name="Zimmermann F.K."/>
            <person name="Sgouros J.G."/>
        </authorList>
    </citation>
    <scope>NUCLEOTIDE SEQUENCE [LARGE SCALE GENOMIC DNA]</scope>
    <source>
        <strain>ATCC 204508 / S288c</strain>
    </source>
</reference>
<reference key="5">
    <citation type="submission" date="2001-06" db="EMBL/GenBank/DDBJ databases">
        <authorList>
            <person name="Valles G."/>
            <person name="Volckaerts G."/>
        </authorList>
    </citation>
    <scope>SEQUENCE REVISION TO 69</scope>
</reference>
<reference key="6">
    <citation type="journal article" date="2014" name="G3 (Bethesda)">
        <title>The reference genome sequence of Saccharomyces cerevisiae: Then and now.</title>
        <authorList>
            <person name="Engel S.R."/>
            <person name="Dietrich F.S."/>
            <person name="Fisk D.G."/>
            <person name="Binkley G."/>
            <person name="Balakrishnan R."/>
            <person name="Costanzo M.C."/>
            <person name="Dwight S.S."/>
            <person name="Hitz B.C."/>
            <person name="Karra K."/>
            <person name="Nash R.S."/>
            <person name="Weng S."/>
            <person name="Wong E.D."/>
            <person name="Lloyd P."/>
            <person name="Skrzypek M.S."/>
            <person name="Miyasato S.R."/>
            <person name="Simison M."/>
            <person name="Cherry J.M."/>
        </authorList>
    </citation>
    <scope>GENOME REANNOTATION</scope>
    <source>
        <strain>ATCC 204508 / S288c</strain>
    </source>
</reference>
<reference key="7">
    <citation type="journal article" date="1984" name="Gene">
        <title>Nucleotide sequence of the 3' terminal region of the LEU2 gene from Saccharomyces cerevisiae.</title>
        <authorList>
            <person name="Froman B.E."/>
            <person name="Tait R.C."/>
            <person name="Rodriguez R.L."/>
        </authorList>
    </citation>
    <scope>NUCLEOTIDE SEQUENCE [GENOMIC DNA] OF 213-364</scope>
</reference>
<reference key="8">
    <citation type="journal article" date="2008" name="Mol. Cell. Proteomics">
        <title>A multidimensional chromatography technology for in-depth phosphoproteome analysis.</title>
        <authorList>
            <person name="Albuquerque C.P."/>
            <person name="Smolka M.B."/>
            <person name="Payne S.H."/>
            <person name="Bafna V."/>
            <person name="Eng J."/>
            <person name="Zhou H."/>
        </authorList>
    </citation>
    <scope>IDENTIFICATION BY MASS SPECTROMETRY [LARGE SCALE ANALYSIS]</scope>
</reference>